<sequence length="629" mass="69521">MFYPDPFDVIIIGGGHAGTEAAMAAARMGQQTLLLTHNIDTLGQMSCNPAIGGIGKGHLVKEVDALGGLMAKAIDQAGIQFRILNASKGPAVRATRAQADRVLYRQAVRTALENQPNLMIFQQAVEDLIVENDRVVGAVTQMGLKFRAKAVVLTVGTFLDGKIHIGLDNYSGGRAGDPPSIPLSRRLRELPLRVGRLKTGTPPRIDARTIDFSVLAQQHGDNPMPVFSFMGNASQHPQQVPCYITHTNEKTHDVIRSNLDRSPMYAGVIEGVGPRYCPSIEDKVMRFADRNQHQIFLEPEGLTSNEIYPNGISTSLPFDVQMQIVRSMQGMENAKIVRPGYAIEYDFFDPRDLKPTLESKFIQGLFFAGQINGTTGYEEAAAQGLLAGLNAARLSADKEGWAPARSQAYLGVLVDDLCTLGTKEPYRMFTSRAEYRLMLREDNADLRLTEIGRELGLVDDERWARFNEKLENIERERQRLKSTWVTPSAEAAAEVNAHLTAPLSREASGEDLLRRPEMTYEKLTTLTPFAPALTDEQAAEQVEIQVKYEGYIARQQDEIEKQLRNENTLLPATLDYRQVSGLSNEVIAKLNDHKPASIGQASRISGVTPAAISILLVWLKKQGMLRRSA</sequence>
<comment type="function">
    <text evidence="1">NAD-binding protein involved in the addition of a carboxymethylaminomethyl (cmnm) group at the wobble position (U34) of certain tRNAs, forming tRNA-cmnm(5)s(2)U34.</text>
</comment>
<comment type="cofactor">
    <cofactor evidence="1">
        <name>FAD</name>
        <dbReference type="ChEBI" id="CHEBI:57692"/>
    </cofactor>
</comment>
<comment type="subunit">
    <text evidence="1">Homodimer. Heterotetramer of two MnmE and two MnmG subunits.</text>
</comment>
<comment type="subcellular location">
    <subcellularLocation>
        <location evidence="1">Cytoplasm</location>
    </subcellularLocation>
</comment>
<comment type="similarity">
    <text evidence="1">Belongs to the MnmG family.</text>
</comment>
<keyword id="KW-0963">Cytoplasm</keyword>
<keyword id="KW-0274">FAD</keyword>
<keyword id="KW-0285">Flavoprotein</keyword>
<keyword id="KW-0520">NAD</keyword>
<keyword id="KW-1185">Reference proteome</keyword>
<keyword id="KW-0819">tRNA processing</keyword>
<gene>
    <name evidence="1" type="primary">mnmG</name>
    <name evidence="1" type="synonym">gidA</name>
    <name type="ordered locus">EcE24377A_4257</name>
</gene>
<dbReference type="EMBL" id="CP000800">
    <property type="protein sequence ID" value="ABV17092.1"/>
    <property type="molecule type" value="Genomic_DNA"/>
</dbReference>
<dbReference type="RefSeq" id="WP_000499788.1">
    <property type="nucleotide sequence ID" value="NC_009801.1"/>
</dbReference>
<dbReference type="SMR" id="A7ZTV2"/>
<dbReference type="GeneID" id="75205459"/>
<dbReference type="KEGG" id="ecw:EcE24377A_4257"/>
<dbReference type="HOGENOM" id="CLU_007831_2_2_6"/>
<dbReference type="Proteomes" id="UP000001122">
    <property type="component" value="Chromosome"/>
</dbReference>
<dbReference type="GO" id="GO:0005829">
    <property type="term" value="C:cytosol"/>
    <property type="evidence" value="ECO:0007669"/>
    <property type="project" value="TreeGrafter"/>
</dbReference>
<dbReference type="GO" id="GO:0050660">
    <property type="term" value="F:flavin adenine dinucleotide binding"/>
    <property type="evidence" value="ECO:0007669"/>
    <property type="project" value="UniProtKB-UniRule"/>
</dbReference>
<dbReference type="GO" id="GO:0030488">
    <property type="term" value="P:tRNA methylation"/>
    <property type="evidence" value="ECO:0007669"/>
    <property type="project" value="TreeGrafter"/>
</dbReference>
<dbReference type="GO" id="GO:0002098">
    <property type="term" value="P:tRNA wobble uridine modification"/>
    <property type="evidence" value="ECO:0007669"/>
    <property type="project" value="InterPro"/>
</dbReference>
<dbReference type="FunFam" id="1.10.10.1800:FF:000001">
    <property type="entry name" value="tRNA uridine 5-carboxymethylaminomethyl modification enzyme MnmG"/>
    <property type="match status" value="1"/>
</dbReference>
<dbReference type="FunFam" id="1.10.150.570:FF:000001">
    <property type="entry name" value="tRNA uridine 5-carboxymethylaminomethyl modification enzyme MnmG"/>
    <property type="match status" value="1"/>
</dbReference>
<dbReference type="FunFam" id="3.50.50.60:FF:000002">
    <property type="entry name" value="tRNA uridine 5-carboxymethylaminomethyl modification enzyme MnmG"/>
    <property type="match status" value="1"/>
</dbReference>
<dbReference type="FunFam" id="3.50.50.60:FF:000010">
    <property type="entry name" value="tRNA uridine 5-carboxymethylaminomethyl modification enzyme MnmG"/>
    <property type="match status" value="1"/>
</dbReference>
<dbReference type="Gene3D" id="3.50.50.60">
    <property type="entry name" value="FAD/NAD(P)-binding domain"/>
    <property type="match status" value="2"/>
</dbReference>
<dbReference type="Gene3D" id="1.10.150.570">
    <property type="entry name" value="GidA associated domain, C-terminal subdomain"/>
    <property type="match status" value="1"/>
</dbReference>
<dbReference type="Gene3D" id="1.10.10.1800">
    <property type="entry name" value="tRNA uridine 5-carboxymethylaminomethyl modification enzyme MnmG/GidA"/>
    <property type="match status" value="1"/>
</dbReference>
<dbReference type="HAMAP" id="MF_00129">
    <property type="entry name" value="MnmG_GidA"/>
    <property type="match status" value="1"/>
</dbReference>
<dbReference type="InterPro" id="IPR036188">
    <property type="entry name" value="FAD/NAD-bd_sf"/>
</dbReference>
<dbReference type="InterPro" id="IPR049312">
    <property type="entry name" value="GIDA_C_N"/>
</dbReference>
<dbReference type="InterPro" id="IPR004416">
    <property type="entry name" value="MnmG"/>
</dbReference>
<dbReference type="InterPro" id="IPR002218">
    <property type="entry name" value="MnmG-rel"/>
</dbReference>
<dbReference type="InterPro" id="IPR020595">
    <property type="entry name" value="MnmG-rel_CS"/>
</dbReference>
<dbReference type="InterPro" id="IPR026904">
    <property type="entry name" value="MnmG_C"/>
</dbReference>
<dbReference type="InterPro" id="IPR047001">
    <property type="entry name" value="MnmG_C_subdom"/>
</dbReference>
<dbReference type="InterPro" id="IPR044920">
    <property type="entry name" value="MnmG_C_subdom_sf"/>
</dbReference>
<dbReference type="InterPro" id="IPR040131">
    <property type="entry name" value="MnmG_N"/>
</dbReference>
<dbReference type="NCBIfam" id="TIGR00136">
    <property type="entry name" value="mnmG_gidA"/>
    <property type="match status" value="1"/>
</dbReference>
<dbReference type="PANTHER" id="PTHR11806">
    <property type="entry name" value="GLUCOSE INHIBITED DIVISION PROTEIN A"/>
    <property type="match status" value="1"/>
</dbReference>
<dbReference type="PANTHER" id="PTHR11806:SF0">
    <property type="entry name" value="PROTEIN MTO1 HOMOLOG, MITOCHONDRIAL"/>
    <property type="match status" value="1"/>
</dbReference>
<dbReference type="Pfam" id="PF01134">
    <property type="entry name" value="GIDA"/>
    <property type="match status" value="1"/>
</dbReference>
<dbReference type="Pfam" id="PF21680">
    <property type="entry name" value="GIDA_C_1st"/>
    <property type="match status" value="1"/>
</dbReference>
<dbReference type="Pfam" id="PF13932">
    <property type="entry name" value="SAM_GIDA_C"/>
    <property type="match status" value="1"/>
</dbReference>
<dbReference type="SMART" id="SM01228">
    <property type="entry name" value="GIDA_assoc_3"/>
    <property type="match status" value="1"/>
</dbReference>
<dbReference type="SUPFAM" id="SSF51905">
    <property type="entry name" value="FAD/NAD(P)-binding domain"/>
    <property type="match status" value="1"/>
</dbReference>
<dbReference type="PROSITE" id="PS01280">
    <property type="entry name" value="GIDA_1"/>
    <property type="match status" value="1"/>
</dbReference>
<dbReference type="PROSITE" id="PS01281">
    <property type="entry name" value="GIDA_2"/>
    <property type="match status" value="1"/>
</dbReference>
<proteinExistence type="inferred from homology"/>
<name>MNMG_ECO24</name>
<accession>A7ZTV2</accession>
<reference key="1">
    <citation type="journal article" date="2008" name="J. Bacteriol.">
        <title>The pangenome structure of Escherichia coli: comparative genomic analysis of E. coli commensal and pathogenic isolates.</title>
        <authorList>
            <person name="Rasko D.A."/>
            <person name="Rosovitz M.J."/>
            <person name="Myers G.S.A."/>
            <person name="Mongodin E.F."/>
            <person name="Fricke W.F."/>
            <person name="Gajer P."/>
            <person name="Crabtree J."/>
            <person name="Sebaihia M."/>
            <person name="Thomson N.R."/>
            <person name="Chaudhuri R."/>
            <person name="Henderson I.R."/>
            <person name="Sperandio V."/>
            <person name="Ravel J."/>
        </authorList>
    </citation>
    <scope>NUCLEOTIDE SEQUENCE [LARGE SCALE GENOMIC DNA]</scope>
    <source>
        <strain>E24377A / ETEC</strain>
    </source>
</reference>
<feature type="chain" id="PRO_1000057841" description="tRNA uridine 5-carboxymethylaminomethyl modification enzyme MnmG">
    <location>
        <begin position="1"/>
        <end position="629"/>
    </location>
</feature>
<feature type="binding site" evidence="1">
    <location>
        <begin position="13"/>
        <end position="18"/>
    </location>
    <ligand>
        <name>FAD</name>
        <dbReference type="ChEBI" id="CHEBI:57692"/>
    </ligand>
</feature>
<feature type="binding site" evidence="1">
    <location>
        <position position="125"/>
    </location>
    <ligand>
        <name>FAD</name>
        <dbReference type="ChEBI" id="CHEBI:57692"/>
    </ligand>
</feature>
<feature type="binding site" evidence="1">
    <location>
        <position position="180"/>
    </location>
    <ligand>
        <name>FAD</name>
        <dbReference type="ChEBI" id="CHEBI:57692"/>
    </ligand>
</feature>
<feature type="binding site" evidence="1">
    <location>
        <begin position="273"/>
        <end position="287"/>
    </location>
    <ligand>
        <name>NAD(+)</name>
        <dbReference type="ChEBI" id="CHEBI:57540"/>
    </ligand>
</feature>
<feature type="binding site" evidence="1">
    <location>
        <position position="370"/>
    </location>
    <ligand>
        <name>FAD</name>
        <dbReference type="ChEBI" id="CHEBI:57692"/>
    </ligand>
</feature>
<evidence type="ECO:0000255" key="1">
    <source>
        <dbReference type="HAMAP-Rule" id="MF_00129"/>
    </source>
</evidence>
<protein>
    <recommendedName>
        <fullName evidence="1">tRNA uridine 5-carboxymethylaminomethyl modification enzyme MnmG</fullName>
    </recommendedName>
    <alternativeName>
        <fullName evidence="1">Glucose-inhibited division protein A</fullName>
    </alternativeName>
</protein>
<organism>
    <name type="scientific">Escherichia coli O139:H28 (strain E24377A / ETEC)</name>
    <dbReference type="NCBI Taxonomy" id="331111"/>
    <lineage>
        <taxon>Bacteria</taxon>
        <taxon>Pseudomonadati</taxon>
        <taxon>Pseudomonadota</taxon>
        <taxon>Gammaproteobacteria</taxon>
        <taxon>Enterobacterales</taxon>
        <taxon>Enterobacteriaceae</taxon>
        <taxon>Escherichia</taxon>
    </lineage>
</organism>